<reference key="1">
    <citation type="journal article" date="2003" name="Nature">
        <title>The genome of a motile marine Synechococcus.</title>
        <authorList>
            <person name="Palenik B."/>
            <person name="Brahamsha B."/>
            <person name="Larimer F.W."/>
            <person name="Land M.L."/>
            <person name="Hauser L."/>
            <person name="Chain P."/>
            <person name="Lamerdin J.E."/>
            <person name="Regala W."/>
            <person name="Allen E.E."/>
            <person name="McCarren J."/>
            <person name="Paulsen I.T."/>
            <person name="Dufresne A."/>
            <person name="Partensky F."/>
            <person name="Webb E.A."/>
            <person name="Waterbury J."/>
        </authorList>
    </citation>
    <scope>NUCLEOTIDE SEQUENCE [LARGE SCALE GENOMIC DNA]</scope>
    <source>
        <strain>WH8102</strain>
    </source>
</reference>
<dbReference type="EC" id="2.4.2.17" evidence="1"/>
<dbReference type="EMBL" id="BX569693">
    <property type="protein sequence ID" value="CAE08057.1"/>
    <property type="molecule type" value="Genomic_DNA"/>
</dbReference>
<dbReference type="RefSeq" id="WP_011128406.1">
    <property type="nucleotide sequence ID" value="NC_005070.1"/>
</dbReference>
<dbReference type="SMR" id="Q7U5Z9"/>
<dbReference type="STRING" id="84588.SYNW1542"/>
<dbReference type="KEGG" id="syw:SYNW1542"/>
<dbReference type="eggNOG" id="COG0040">
    <property type="taxonomic scope" value="Bacteria"/>
</dbReference>
<dbReference type="HOGENOM" id="CLU_038115_2_0_3"/>
<dbReference type="UniPathway" id="UPA00031">
    <property type="reaction ID" value="UER00006"/>
</dbReference>
<dbReference type="Proteomes" id="UP000001422">
    <property type="component" value="Chromosome"/>
</dbReference>
<dbReference type="GO" id="GO:0005737">
    <property type="term" value="C:cytoplasm"/>
    <property type="evidence" value="ECO:0007669"/>
    <property type="project" value="UniProtKB-SubCell"/>
</dbReference>
<dbReference type="GO" id="GO:0005524">
    <property type="term" value="F:ATP binding"/>
    <property type="evidence" value="ECO:0007669"/>
    <property type="project" value="UniProtKB-KW"/>
</dbReference>
<dbReference type="GO" id="GO:0003879">
    <property type="term" value="F:ATP phosphoribosyltransferase activity"/>
    <property type="evidence" value="ECO:0007669"/>
    <property type="project" value="UniProtKB-UniRule"/>
</dbReference>
<dbReference type="GO" id="GO:0000105">
    <property type="term" value="P:L-histidine biosynthetic process"/>
    <property type="evidence" value="ECO:0007669"/>
    <property type="project" value="UniProtKB-UniRule"/>
</dbReference>
<dbReference type="CDD" id="cd13595">
    <property type="entry name" value="PBP2_HisGs"/>
    <property type="match status" value="1"/>
</dbReference>
<dbReference type="FunFam" id="3.40.190.10:FF:000008">
    <property type="entry name" value="ATP phosphoribosyltransferase"/>
    <property type="match status" value="1"/>
</dbReference>
<dbReference type="Gene3D" id="3.40.190.10">
    <property type="entry name" value="Periplasmic binding protein-like II"/>
    <property type="match status" value="2"/>
</dbReference>
<dbReference type="HAMAP" id="MF_01018">
    <property type="entry name" value="HisG_Short"/>
    <property type="match status" value="1"/>
</dbReference>
<dbReference type="InterPro" id="IPR013820">
    <property type="entry name" value="ATP_PRibTrfase_cat"/>
</dbReference>
<dbReference type="InterPro" id="IPR018198">
    <property type="entry name" value="ATP_PRibTrfase_CS"/>
</dbReference>
<dbReference type="InterPro" id="IPR001348">
    <property type="entry name" value="ATP_PRibTrfase_HisG"/>
</dbReference>
<dbReference type="InterPro" id="IPR024893">
    <property type="entry name" value="ATP_PRibTrfase_HisG_short"/>
</dbReference>
<dbReference type="NCBIfam" id="TIGR00070">
    <property type="entry name" value="hisG"/>
    <property type="match status" value="1"/>
</dbReference>
<dbReference type="PANTHER" id="PTHR21403:SF8">
    <property type="entry name" value="ATP PHOSPHORIBOSYLTRANSFERASE"/>
    <property type="match status" value="1"/>
</dbReference>
<dbReference type="PANTHER" id="PTHR21403">
    <property type="entry name" value="ATP PHOSPHORIBOSYLTRANSFERASE ATP-PRTASE"/>
    <property type="match status" value="1"/>
</dbReference>
<dbReference type="Pfam" id="PF01634">
    <property type="entry name" value="HisG"/>
    <property type="match status" value="1"/>
</dbReference>
<dbReference type="SUPFAM" id="SSF53850">
    <property type="entry name" value="Periplasmic binding protein-like II"/>
    <property type="match status" value="1"/>
</dbReference>
<dbReference type="PROSITE" id="PS01316">
    <property type="entry name" value="ATP_P_PHORIBOSYLTR"/>
    <property type="match status" value="1"/>
</dbReference>
<keyword id="KW-0028">Amino-acid biosynthesis</keyword>
<keyword id="KW-0067">ATP-binding</keyword>
<keyword id="KW-0963">Cytoplasm</keyword>
<keyword id="KW-0328">Glycosyltransferase</keyword>
<keyword id="KW-0368">Histidine biosynthesis</keyword>
<keyword id="KW-0547">Nucleotide-binding</keyword>
<keyword id="KW-0808">Transferase</keyword>
<name>HIS1_PARMW</name>
<organism>
    <name type="scientific">Parasynechococcus marenigrum (strain WH8102)</name>
    <dbReference type="NCBI Taxonomy" id="84588"/>
    <lineage>
        <taxon>Bacteria</taxon>
        <taxon>Bacillati</taxon>
        <taxon>Cyanobacteriota</taxon>
        <taxon>Cyanophyceae</taxon>
        <taxon>Synechococcales</taxon>
        <taxon>Prochlorococcaceae</taxon>
        <taxon>Parasynechococcus</taxon>
        <taxon>Parasynechococcus marenigrum</taxon>
    </lineage>
</organism>
<protein>
    <recommendedName>
        <fullName evidence="1">ATP phosphoribosyltransferase</fullName>
        <shortName evidence="1">ATP-PRT</shortName>
        <shortName evidence="1">ATP-PRTase</shortName>
        <ecNumber evidence="1">2.4.2.17</ecNumber>
    </recommendedName>
</protein>
<feature type="chain" id="PRO_0000151942" description="ATP phosphoribosyltransferase">
    <location>
        <begin position="1"/>
        <end position="217"/>
    </location>
</feature>
<gene>
    <name evidence="1" type="primary">hisG</name>
    <name type="ordered locus">SYNW1542</name>
</gene>
<sequence>MITVALAKGALLKDSAARFAAAGLDFSAALDKDNRQLMLPTPCGRARALLVRNGDVPTYVAYGQAQLGVVGYDVLREHQLPVAQLVDLGFGGCRMAVAVKASSGYERAADLPPHCRVASKFTHCAREYFDGLDLPVELVHLNGSVELGPITGMSEAIVDLVATGRTLRDNGLVAIEDLFHTTARLVGHPLSMRLDDGSLNAIVEAVRTASAAAGAAG</sequence>
<proteinExistence type="inferred from homology"/>
<evidence type="ECO:0000255" key="1">
    <source>
        <dbReference type="HAMAP-Rule" id="MF_01018"/>
    </source>
</evidence>
<comment type="function">
    <text evidence="1">Catalyzes the condensation of ATP and 5-phosphoribose 1-diphosphate to form N'-(5'-phosphoribosyl)-ATP (PR-ATP). Has a crucial role in the pathway because the rate of histidine biosynthesis seems to be controlled primarily by regulation of HisG enzymatic activity.</text>
</comment>
<comment type="catalytic activity">
    <reaction evidence="1">
        <text>1-(5-phospho-beta-D-ribosyl)-ATP + diphosphate = 5-phospho-alpha-D-ribose 1-diphosphate + ATP</text>
        <dbReference type="Rhea" id="RHEA:18473"/>
        <dbReference type="ChEBI" id="CHEBI:30616"/>
        <dbReference type="ChEBI" id="CHEBI:33019"/>
        <dbReference type="ChEBI" id="CHEBI:58017"/>
        <dbReference type="ChEBI" id="CHEBI:73183"/>
        <dbReference type="EC" id="2.4.2.17"/>
    </reaction>
</comment>
<comment type="pathway">
    <text evidence="1">Amino-acid biosynthesis; L-histidine biosynthesis; L-histidine from 5-phospho-alpha-D-ribose 1-diphosphate: step 1/9.</text>
</comment>
<comment type="subunit">
    <text evidence="1">Heteromultimer composed of HisG and HisZ subunits.</text>
</comment>
<comment type="subcellular location">
    <subcellularLocation>
        <location evidence="1">Cytoplasm</location>
    </subcellularLocation>
</comment>
<comment type="domain">
    <text>Lacks the C-terminal regulatory region which is replaced by HisZ.</text>
</comment>
<comment type="similarity">
    <text evidence="1">Belongs to the ATP phosphoribosyltransferase family. Short subfamily.</text>
</comment>
<accession>Q7U5Z9</accession>